<accession>A1SVD8</accession>
<sequence>MLLFFVILGIFVLTILKAISKQRWSWLLLAASALSLELSALYFQHVMQLEPCVMCVYERLAMLGILLAGLIGASSPNNVFIRLSAFLLWGISAVWGILLAIKHTDYQLHPSPFFTCDFFPNFPAWAPLHEWLPWLFNPTGDCSDIVWQFLGYSMPQWLIVSFSLYTLLFIIFAISAVLKTKKQLF</sequence>
<feature type="chain" id="PRO_0000298398" description="Disulfide bond formation protein B">
    <location>
        <begin position="1"/>
        <end position="185"/>
    </location>
</feature>
<feature type="topological domain" description="Cytoplasmic" evidence="1">
    <location>
        <begin position="1"/>
        <end position="25"/>
    </location>
</feature>
<feature type="transmembrane region" description="Helical" evidence="1">
    <location>
        <begin position="26"/>
        <end position="42"/>
    </location>
</feature>
<feature type="topological domain" description="Periplasmic" evidence="1">
    <location>
        <begin position="43"/>
        <end position="60"/>
    </location>
</feature>
<feature type="transmembrane region" description="Helical" evidence="1">
    <location>
        <begin position="61"/>
        <end position="76"/>
    </location>
</feature>
<feature type="topological domain" description="Cytoplasmic" evidence="1">
    <location>
        <begin position="77"/>
        <end position="83"/>
    </location>
</feature>
<feature type="transmembrane region" description="Helical" evidence="1">
    <location>
        <begin position="84"/>
        <end position="101"/>
    </location>
</feature>
<feature type="topological domain" description="Periplasmic" evidence="1">
    <location>
        <begin position="102"/>
        <end position="156"/>
    </location>
</feature>
<feature type="transmembrane region" description="Helical" evidence="1">
    <location>
        <begin position="157"/>
        <end position="175"/>
    </location>
</feature>
<feature type="topological domain" description="Cytoplasmic" evidence="1">
    <location>
        <begin position="176"/>
        <end position="185"/>
    </location>
</feature>
<feature type="disulfide bond" description="Redox-active" evidence="1">
    <location>
        <begin position="52"/>
        <end position="55"/>
    </location>
</feature>
<feature type="disulfide bond" description="Redox-active" evidence="1">
    <location>
        <begin position="116"/>
        <end position="142"/>
    </location>
</feature>
<comment type="function">
    <text evidence="1">Required for disulfide bond formation in some periplasmic proteins. Acts by oxidizing the DsbA protein.</text>
</comment>
<comment type="subcellular location">
    <subcellularLocation>
        <location evidence="1">Cell inner membrane</location>
        <topology evidence="1">Multi-pass membrane protein</topology>
    </subcellularLocation>
</comment>
<comment type="similarity">
    <text evidence="1">Belongs to the DsbB family.</text>
</comment>
<protein>
    <recommendedName>
        <fullName evidence="1">Disulfide bond formation protein B</fullName>
    </recommendedName>
    <alternativeName>
        <fullName evidence="1">Disulfide oxidoreductase</fullName>
    </alternativeName>
</protein>
<gene>
    <name evidence="1" type="primary">dsbB</name>
    <name type="ordered locus">Ping_1660</name>
</gene>
<name>DSBB_PSYIN</name>
<dbReference type="EMBL" id="CP000510">
    <property type="protein sequence ID" value="ABM03453.1"/>
    <property type="molecule type" value="Genomic_DNA"/>
</dbReference>
<dbReference type="RefSeq" id="WP_011770013.1">
    <property type="nucleotide sequence ID" value="NC_008709.1"/>
</dbReference>
<dbReference type="SMR" id="A1SVD8"/>
<dbReference type="STRING" id="357804.Ping_1660"/>
<dbReference type="KEGG" id="pin:Ping_1660"/>
<dbReference type="eggNOG" id="COG1495">
    <property type="taxonomic scope" value="Bacteria"/>
</dbReference>
<dbReference type="HOGENOM" id="CLU_098660_2_0_6"/>
<dbReference type="OrthoDB" id="3711263at2"/>
<dbReference type="Proteomes" id="UP000000639">
    <property type="component" value="Chromosome"/>
</dbReference>
<dbReference type="GO" id="GO:0005886">
    <property type="term" value="C:plasma membrane"/>
    <property type="evidence" value="ECO:0007669"/>
    <property type="project" value="UniProtKB-SubCell"/>
</dbReference>
<dbReference type="GO" id="GO:0009055">
    <property type="term" value="F:electron transfer activity"/>
    <property type="evidence" value="ECO:0007669"/>
    <property type="project" value="UniProtKB-UniRule"/>
</dbReference>
<dbReference type="GO" id="GO:0015035">
    <property type="term" value="F:protein-disulfide reductase activity"/>
    <property type="evidence" value="ECO:0007669"/>
    <property type="project" value="UniProtKB-UniRule"/>
</dbReference>
<dbReference type="GO" id="GO:0006457">
    <property type="term" value="P:protein folding"/>
    <property type="evidence" value="ECO:0007669"/>
    <property type="project" value="InterPro"/>
</dbReference>
<dbReference type="Gene3D" id="1.20.1550.10">
    <property type="entry name" value="DsbB-like"/>
    <property type="match status" value="1"/>
</dbReference>
<dbReference type="HAMAP" id="MF_00286">
    <property type="entry name" value="DsbB"/>
    <property type="match status" value="1"/>
</dbReference>
<dbReference type="InterPro" id="IPR003752">
    <property type="entry name" value="DiS_bond_form_DsbB/BdbC"/>
</dbReference>
<dbReference type="InterPro" id="IPR022920">
    <property type="entry name" value="Disulphide_bond_form_DsbB"/>
</dbReference>
<dbReference type="InterPro" id="IPR050183">
    <property type="entry name" value="DsbB"/>
</dbReference>
<dbReference type="InterPro" id="IPR023380">
    <property type="entry name" value="DsbB-like_sf"/>
</dbReference>
<dbReference type="NCBIfam" id="NF002485">
    <property type="entry name" value="PRK01749.1"/>
    <property type="match status" value="1"/>
</dbReference>
<dbReference type="PANTHER" id="PTHR36570">
    <property type="entry name" value="DISULFIDE BOND FORMATION PROTEIN B"/>
    <property type="match status" value="1"/>
</dbReference>
<dbReference type="PANTHER" id="PTHR36570:SF2">
    <property type="entry name" value="DISULFIDE BOND FORMATION PROTEIN B"/>
    <property type="match status" value="1"/>
</dbReference>
<dbReference type="Pfam" id="PF02600">
    <property type="entry name" value="DsbB"/>
    <property type="match status" value="1"/>
</dbReference>
<dbReference type="SUPFAM" id="SSF158442">
    <property type="entry name" value="DsbB-like"/>
    <property type="match status" value="1"/>
</dbReference>
<keyword id="KW-0997">Cell inner membrane</keyword>
<keyword id="KW-1003">Cell membrane</keyword>
<keyword id="KW-0143">Chaperone</keyword>
<keyword id="KW-1015">Disulfide bond</keyword>
<keyword id="KW-0249">Electron transport</keyword>
<keyword id="KW-0472">Membrane</keyword>
<keyword id="KW-0560">Oxidoreductase</keyword>
<keyword id="KW-0676">Redox-active center</keyword>
<keyword id="KW-1185">Reference proteome</keyword>
<keyword id="KW-0812">Transmembrane</keyword>
<keyword id="KW-1133">Transmembrane helix</keyword>
<keyword id="KW-0813">Transport</keyword>
<organism>
    <name type="scientific">Psychromonas ingrahamii (strain DSM 17664 / CCUG 51855 / 37)</name>
    <dbReference type="NCBI Taxonomy" id="357804"/>
    <lineage>
        <taxon>Bacteria</taxon>
        <taxon>Pseudomonadati</taxon>
        <taxon>Pseudomonadota</taxon>
        <taxon>Gammaproteobacteria</taxon>
        <taxon>Alteromonadales</taxon>
        <taxon>Psychromonadaceae</taxon>
        <taxon>Psychromonas</taxon>
    </lineage>
</organism>
<proteinExistence type="inferred from homology"/>
<evidence type="ECO:0000255" key="1">
    <source>
        <dbReference type="HAMAP-Rule" id="MF_00286"/>
    </source>
</evidence>
<reference key="1">
    <citation type="journal article" date="2008" name="BMC Genomics">
        <title>Genomics of an extreme psychrophile, Psychromonas ingrahamii.</title>
        <authorList>
            <person name="Riley M."/>
            <person name="Staley J.T."/>
            <person name="Danchin A."/>
            <person name="Wang T.Z."/>
            <person name="Brettin T.S."/>
            <person name="Hauser L.J."/>
            <person name="Land M.L."/>
            <person name="Thompson L.S."/>
        </authorList>
    </citation>
    <scope>NUCLEOTIDE SEQUENCE [LARGE SCALE GENOMIC DNA]</scope>
    <source>
        <strain>DSM 17664 / CCUG 51855 / 37</strain>
    </source>
</reference>